<sequence length="392" mass="41999">MALMTVRDIDVKGKRVFVRVDFNVPLEDGRITDDTRIRAAVPTIRYLVEEGAVAVLASHLGRPKGQRNEKYSLAPCARRLSELLGREVVFAPDCIGEEVERLVAEQPPGSVVLLENVRFYAEEEKNDPEFAAKLARLGEIFVNDAFGTAHRAHASTRGVADHMPVRVAGFLMQKEVDIMGKALSDPDRPFVAIIGGAKVSDKIMVIENLLTKVDRLIIGGGMANTFLRARGFATGKSLVEEDRVDTARELLAKGGDKILLPTDLVVASEFKADAEQKVVPVDAIPEGWMALDIGPETARAFADVIRGAHTVVWNGPMGVFEMEPFARGTFAVAQAMADCEGVTIVGGGDSVAAVEAAGLADRMTHVSTGGGASLEFLEGKELPGVACLAVKP</sequence>
<protein>
    <recommendedName>
        <fullName evidence="1">Phosphoglycerate kinase</fullName>
        <ecNumber evidence="1">2.7.2.3</ecNumber>
    </recommendedName>
</protein>
<organism>
    <name type="scientific">Symbiobacterium thermophilum (strain DSM 24528 / JCM 14929 / IAM 14863 / T)</name>
    <dbReference type="NCBI Taxonomy" id="292459"/>
    <lineage>
        <taxon>Bacteria</taxon>
        <taxon>Bacillati</taxon>
        <taxon>Bacillota</taxon>
        <taxon>Clostridia</taxon>
        <taxon>Eubacteriales</taxon>
        <taxon>Symbiobacteriaceae</taxon>
        <taxon>Symbiobacterium</taxon>
    </lineage>
</organism>
<reference key="1">
    <citation type="journal article" date="2004" name="Nucleic Acids Res.">
        <title>Genome sequence of Symbiobacterium thermophilum, an uncultivable bacterium that depends on microbial commensalism.</title>
        <authorList>
            <person name="Ueda K."/>
            <person name="Yamashita A."/>
            <person name="Ishikawa J."/>
            <person name="Shimada M."/>
            <person name="Watsuji T."/>
            <person name="Morimura K."/>
            <person name="Ikeda H."/>
            <person name="Hattori M."/>
            <person name="Beppu T."/>
        </authorList>
    </citation>
    <scope>NUCLEOTIDE SEQUENCE [LARGE SCALE GENOMIC DNA]</scope>
    <source>
        <strain>DSM 24528 / JCM 14929 / IAM 14863 / T</strain>
    </source>
</reference>
<proteinExistence type="inferred from homology"/>
<feature type="chain" id="PRO_1000058074" description="Phosphoglycerate kinase">
    <location>
        <begin position="1"/>
        <end position="392"/>
    </location>
</feature>
<feature type="binding site" evidence="1">
    <location>
        <begin position="21"/>
        <end position="23"/>
    </location>
    <ligand>
        <name>substrate</name>
    </ligand>
</feature>
<feature type="binding site" evidence="1">
    <location>
        <position position="36"/>
    </location>
    <ligand>
        <name>substrate</name>
    </ligand>
</feature>
<feature type="binding site" evidence="1">
    <location>
        <begin position="59"/>
        <end position="62"/>
    </location>
    <ligand>
        <name>substrate</name>
    </ligand>
</feature>
<feature type="binding site" evidence="1">
    <location>
        <position position="118"/>
    </location>
    <ligand>
        <name>substrate</name>
    </ligand>
</feature>
<feature type="binding site" evidence="1">
    <location>
        <position position="151"/>
    </location>
    <ligand>
        <name>substrate</name>
    </ligand>
</feature>
<feature type="binding site" evidence="1">
    <location>
        <position position="202"/>
    </location>
    <ligand>
        <name>ATP</name>
        <dbReference type="ChEBI" id="CHEBI:30616"/>
    </ligand>
</feature>
<feature type="binding site" evidence="1">
    <location>
        <position position="321"/>
    </location>
    <ligand>
        <name>ATP</name>
        <dbReference type="ChEBI" id="CHEBI:30616"/>
    </ligand>
</feature>
<feature type="binding site" evidence="1">
    <location>
        <begin position="347"/>
        <end position="350"/>
    </location>
    <ligand>
        <name>ATP</name>
        <dbReference type="ChEBI" id="CHEBI:30616"/>
    </ligand>
</feature>
<accession>Q67SW6</accession>
<dbReference type="EC" id="2.7.2.3" evidence="1"/>
<dbReference type="EMBL" id="AP006840">
    <property type="protein sequence ID" value="BAD39227.1"/>
    <property type="molecule type" value="Genomic_DNA"/>
</dbReference>
<dbReference type="RefSeq" id="WP_011194377.1">
    <property type="nucleotide sequence ID" value="NC_006177.1"/>
</dbReference>
<dbReference type="SMR" id="Q67SW6"/>
<dbReference type="STRING" id="292459.STH242"/>
<dbReference type="KEGG" id="sth:STH242"/>
<dbReference type="eggNOG" id="COG0126">
    <property type="taxonomic scope" value="Bacteria"/>
</dbReference>
<dbReference type="HOGENOM" id="CLU_025427_0_2_9"/>
<dbReference type="OrthoDB" id="9808460at2"/>
<dbReference type="UniPathway" id="UPA00109">
    <property type="reaction ID" value="UER00185"/>
</dbReference>
<dbReference type="Proteomes" id="UP000000417">
    <property type="component" value="Chromosome"/>
</dbReference>
<dbReference type="GO" id="GO:0005829">
    <property type="term" value="C:cytosol"/>
    <property type="evidence" value="ECO:0007669"/>
    <property type="project" value="TreeGrafter"/>
</dbReference>
<dbReference type="GO" id="GO:0043531">
    <property type="term" value="F:ADP binding"/>
    <property type="evidence" value="ECO:0007669"/>
    <property type="project" value="TreeGrafter"/>
</dbReference>
<dbReference type="GO" id="GO:0005524">
    <property type="term" value="F:ATP binding"/>
    <property type="evidence" value="ECO:0007669"/>
    <property type="project" value="UniProtKB-KW"/>
</dbReference>
<dbReference type="GO" id="GO:0004618">
    <property type="term" value="F:phosphoglycerate kinase activity"/>
    <property type="evidence" value="ECO:0007669"/>
    <property type="project" value="UniProtKB-UniRule"/>
</dbReference>
<dbReference type="GO" id="GO:0006094">
    <property type="term" value="P:gluconeogenesis"/>
    <property type="evidence" value="ECO:0007669"/>
    <property type="project" value="TreeGrafter"/>
</dbReference>
<dbReference type="GO" id="GO:0006096">
    <property type="term" value="P:glycolytic process"/>
    <property type="evidence" value="ECO:0007669"/>
    <property type="project" value="UniProtKB-UniRule"/>
</dbReference>
<dbReference type="CDD" id="cd00318">
    <property type="entry name" value="Phosphoglycerate_kinase"/>
    <property type="match status" value="1"/>
</dbReference>
<dbReference type="FunFam" id="3.40.50.1260:FF:000002">
    <property type="entry name" value="Phosphoglycerate kinase"/>
    <property type="match status" value="1"/>
</dbReference>
<dbReference type="FunFam" id="3.40.50.1260:FF:000007">
    <property type="entry name" value="Phosphoglycerate kinase"/>
    <property type="match status" value="1"/>
</dbReference>
<dbReference type="Gene3D" id="3.40.50.1260">
    <property type="entry name" value="Phosphoglycerate kinase, N-terminal domain"/>
    <property type="match status" value="2"/>
</dbReference>
<dbReference type="HAMAP" id="MF_00145">
    <property type="entry name" value="Phosphoglyc_kinase"/>
    <property type="match status" value="1"/>
</dbReference>
<dbReference type="InterPro" id="IPR001576">
    <property type="entry name" value="Phosphoglycerate_kinase"/>
</dbReference>
<dbReference type="InterPro" id="IPR015911">
    <property type="entry name" value="Phosphoglycerate_kinase_CS"/>
</dbReference>
<dbReference type="InterPro" id="IPR015824">
    <property type="entry name" value="Phosphoglycerate_kinase_N"/>
</dbReference>
<dbReference type="InterPro" id="IPR036043">
    <property type="entry name" value="Phosphoglycerate_kinase_sf"/>
</dbReference>
<dbReference type="PANTHER" id="PTHR11406">
    <property type="entry name" value="PHOSPHOGLYCERATE KINASE"/>
    <property type="match status" value="1"/>
</dbReference>
<dbReference type="PANTHER" id="PTHR11406:SF23">
    <property type="entry name" value="PHOSPHOGLYCERATE KINASE 1, CHLOROPLASTIC-RELATED"/>
    <property type="match status" value="1"/>
</dbReference>
<dbReference type="Pfam" id="PF00162">
    <property type="entry name" value="PGK"/>
    <property type="match status" value="1"/>
</dbReference>
<dbReference type="PIRSF" id="PIRSF000724">
    <property type="entry name" value="Pgk"/>
    <property type="match status" value="1"/>
</dbReference>
<dbReference type="PRINTS" id="PR00477">
    <property type="entry name" value="PHGLYCKINASE"/>
</dbReference>
<dbReference type="SUPFAM" id="SSF53748">
    <property type="entry name" value="Phosphoglycerate kinase"/>
    <property type="match status" value="1"/>
</dbReference>
<dbReference type="PROSITE" id="PS00111">
    <property type="entry name" value="PGLYCERATE_KINASE"/>
    <property type="match status" value="1"/>
</dbReference>
<name>PGK_SYMTH</name>
<keyword id="KW-0067">ATP-binding</keyword>
<keyword id="KW-0963">Cytoplasm</keyword>
<keyword id="KW-0324">Glycolysis</keyword>
<keyword id="KW-0418">Kinase</keyword>
<keyword id="KW-0547">Nucleotide-binding</keyword>
<keyword id="KW-1185">Reference proteome</keyword>
<keyword id="KW-0808">Transferase</keyword>
<comment type="catalytic activity">
    <reaction evidence="1">
        <text>(2R)-3-phosphoglycerate + ATP = (2R)-3-phospho-glyceroyl phosphate + ADP</text>
        <dbReference type="Rhea" id="RHEA:14801"/>
        <dbReference type="ChEBI" id="CHEBI:30616"/>
        <dbReference type="ChEBI" id="CHEBI:57604"/>
        <dbReference type="ChEBI" id="CHEBI:58272"/>
        <dbReference type="ChEBI" id="CHEBI:456216"/>
        <dbReference type="EC" id="2.7.2.3"/>
    </reaction>
</comment>
<comment type="pathway">
    <text evidence="1">Carbohydrate degradation; glycolysis; pyruvate from D-glyceraldehyde 3-phosphate: step 2/5.</text>
</comment>
<comment type="subunit">
    <text evidence="1">Monomer.</text>
</comment>
<comment type="subcellular location">
    <subcellularLocation>
        <location evidence="1">Cytoplasm</location>
    </subcellularLocation>
</comment>
<comment type="similarity">
    <text evidence="1">Belongs to the phosphoglycerate kinase family.</text>
</comment>
<gene>
    <name evidence="1" type="primary">pgk</name>
    <name type="ordered locus">STH242</name>
</gene>
<evidence type="ECO:0000255" key="1">
    <source>
        <dbReference type="HAMAP-Rule" id="MF_00145"/>
    </source>
</evidence>